<organism>
    <name type="scientific">Klebsiella pneumoniae</name>
    <dbReference type="NCBI Taxonomy" id="573"/>
    <lineage>
        <taxon>Bacteria</taxon>
        <taxon>Pseudomonadati</taxon>
        <taxon>Pseudomonadota</taxon>
        <taxon>Gammaproteobacteria</taxon>
        <taxon>Enterobacterales</taxon>
        <taxon>Enterobacteriaceae</taxon>
        <taxon>Klebsiella/Raoultella group</taxon>
        <taxon>Klebsiella</taxon>
        <taxon>Klebsiella pneumoniae complex</taxon>
    </lineage>
</organism>
<evidence type="ECO:0000303" key="1">
    <source>
    </source>
</evidence>
<evidence type="ECO:0000303" key="2">
    <source>
    </source>
</evidence>
<sequence>MDVFDKVYSDDNNSYDQKTVSQRIEALFLNNLGKVVTRQQIIRAATDPKTGKQPENWHQRLSELRTDKGYTILSWRDMKVLAPQEYIMPHATRRPKAAKRVLPTKETWEQVLDRANYSCEWQEDGQHCGLVEGDIDPIGGGTVKLTPDHMTPHSIDPATDVNDPKMWQALCGRHQVMKKNYWDSNNGKINVIGILQSVNEKQKNDALEFLLNYYGLKR</sequence>
<reference key="1">
    <citation type="journal article" date="1991" name="Nucleic Acids Res.">
        <title>Genetic organization of the KpnI restriction-modification system.</title>
        <authorList>
            <person name="Chatterjee D.K."/>
            <person name="Hammond A.W."/>
            <person name="Blakesley R.W."/>
            <person name="Adams S.M."/>
            <person name="Gerard G.F."/>
        </authorList>
    </citation>
    <scope>NUCLEOTIDE SEQUENCE [GENOMIC DNA]</scope>
    <scope>PROTEIN SEQUENCE OF 1-12</scope>
    <source>
        <strain>OK8</strain>
    </source>
</reference>
<reference key="2">
    <citation type="journal article" date="2003" name="Nucleic Acids Res.">
        <title>A nomenclature for restriction enzymes, DNA methyltransferases, homing endonucleases and their genes.</title>
        <authorList>
            <person name="Roberts R.J."/>
            <person name="Belfort M."/>
            <person name="Bestor T."/>
            <person name="Bhagwat A.S."/>
            <person name="Bickle T.A."/>
            <person name="Bitinaite J."/>
            <person name="Blumenthal R.M."/>
            <person name="Degtyarev S.K."/>
            <person name="Dryden D.T."/>
            <person name="Dybvig K."/>
            <person name="Firman K."/>
            <person name="Gromova E.S."/>
            <person name="Gumport R.I."/>
            <person name="Halford S.E."/>
            <person name="Hattman S."/>
            <person name="Heitman J."/>
            <person name="Hornby D.P."/>
            <person name="Janulaitis A."/>
            <person name="Jeltsch A."/>
            <person name="Josephsen J."/>
            <person name="Kiss A."/>
            <person name="Klaenhammer T.R."/>
            <person name="Kobayashi I."/>
            <person name="Kong H."/>
            <person name="Krueger D.H."/>
            <person name="Lacks S."/>
            <person name="Marinus M.G."/>
            <person name="Miyahara M."/>
            <person name="Morgan R.D."/>
            <person name="Murray N.E."/>
            <person name="Nagaraja V."/>
            <person name="Piekarowicz A."/>
            <person name="Pingoud A."/>
            <person name="Raleigh E."/>
            <person name="Rao D.N."/>
            <person name="Reich N."/>
            <person name="Repin V.E."/>
            <person name="Selker E.U."/>
            <person name="Shaw P.C."/>
            <person name="Stein D.C."/>
            <person name="Stoddard B.L."/>
            <person name="Szybalski W."/>
            <person name="Trautner T.A."/>
            <person name="Van Etten J.L."/>
            <person name="Vitor J.M."/>
            <person name="Wilson G.G."/>
            <person name="Xu S.Y."/>
        </authorList>
    </citation>
    <scope>NOMENCLATURE</scope>
    <scope>SUBTYPE</scope>
</reference>
<proteinExistence type="evidence at protein level"/>
<comment type="function">
    <text evidence="1">A P subtype restriction enzyme that recognizes the double-stranded sequence 5'-GGTACC-3' and cleaves after C-5.</text>
</comment>
<comment type="catalytic activity">
    <reaction>
        <text>Endonucleolytic cleavage of DNA to give specific double-stranded fragments with terminal 5'-phosphates.</text>
        <dbReference type="EC" id="3.1.21.4"/>
    </reaction>
</comment>
<keyword id="KW-0903">Direct protein sequencing</keyword>
<keyword id="KW-0255">Endonuclease</keyword>
<keyword id="KW-0378">Hydrolase</keyword>
<keyword id="KW-0540">Nuclease</keyword>
<keyword id="KW-0680">Restriction system</keyword>
<gene>
    <name evidence="2" type="primary">kpnIR</name>
</gene>
<feature type="chain" id="PRO_0000077327" description="Type II restriction enzyme KpnI">
    <location>
        <begin position="1"/>
        <end position="218"/>
    </location>
</feature>
<accession>P25237</accession>
<dbReference type="EC" id="3.1.21.4"/>
<dbReference type="EMBL" id="M76435">
    <property type="protein sequence ID" value="AAA25089.1"/>
    <property type="molecule type" value="Genomic_DNA"/>
</dbReference>
<dbReference type="EMBL" id="X61796">
    <property type="protein sequence ID" value="CAA43897.1"/>
    <property type="molecule type" value="Genomic_DNA"/>
</dbReference>
<dbReference type="PIR" id="S34431">
    <property type="entry name" value="S34431"/>
</dbReference>
<dbReference type="RefSeq" id="WP_004176755.1">
    <property type="nucleotide sequence ID" value="NZ_ULCW01000003.1"/>
</dbReference>
<dbReference type="REBASE" id="1180">
    <property type="entry name" value="KpnI"/>
</dbReference>
<dbReference type="REBASE" id="152761">
    <property type="entry name" value="Rsp541ORF2003P"/>
</dbReference>
<dbReference type="REBASE" id="152769">
    <property type="entry name" value="Rsp941ORF2000P"/>
</dbReference>
<dbReference type="PATRIC" id="fig|573.1567.peg.2312"/>
<dbReference type="BRENDA" id="3.1.21.4">
    <property type="organism ID" value="2814"/>
</dbReference>
<dbReference type="PRO" id="PR:P25237"/>
<dbReference type="GO" id="GO:0009036">
    <property type="term" value="F:type II site-specific deoxyribonuclease activity"/>
    <property type="evidence" value="ECO:0007669"/>
    <property type="project" value="UniProtKB-EC"/>
</dbReference>
<dbReference type="GO" id="GO:0009307">
    <property type="term" value="P:DNA restriction-modification system"/>
    <property type="evidence" value="ECO:0007669"/>
    <property type="project" value="UniProtKB-KW"/>
</dbReference>
<name>T2K1_KLEPN</name>
<protein>
    <recommendedName>
        <fullName evidence="1">Type II restriction enzyme KpnI</fullName>
        <shortName evidence="2">R.KpnI</shortName>
        <ecNumber>3.1.21.4</ecNumber>
    </recommendedName>
    <alternativeName>
        <fullName>Endonuclease KpnI</fullName>
    </alternativeName>
    <alternativeName>
        <fullName>Type-2 restriction enzyme KpnI</fullName>
    </alternativeName>
</protein>